<dbReference type="EMBL" id="CP000148">
    <property type="protein sequence ID" value="ABB33737.1"/>
    <property type="molecule type" value="Genomic_DNA"/>
</dbReference>
<dbReference type="RefSeq" id="WP_004513688.1">
    <property type="nucleotide sequence ID" value="NC_007517.1"/>
</dbReference>
<dbReference type="SMR" id="Q39PT7"/>
<dbReference type="STRING" id="269799.Gmet_3532"/>
<dbReference type="KEGG" id="gme:Gmet_3532"/>
<dbReference type="eggNOG" id="COG0443">
    <property type="taxonomic scope" value="Bacteria"/>
</dbReference>
<dbReference type="HOGENOM" id="CLU_005965_2_0_7"/>
<dbReference type="Proteomes" id="UP000007073">
    <property type="component" value="Chromosome"/>
</dbReference>
<dbReference type="GO" id="GO:0005524">
    <property type="term" value="F:ATP binding"/>
    <property type="evidence" value="ECO:0007669"/>
    <property type="project" value="UniProtKB-UniRule"/>
</dbReference>
<dbReference type="GO" id="GO:0140662">
    <property type="term" value="F:ATP-dependent protein folding chaperone"/>
    <property type="evidence" value="ECO:0007669"/>
    <property type="project" value="InterPro"/>
</dbReference>
<dbReference type="GO" id="GO:0051082">
    <property type="term" value="F:unfolded protein binding"/>
    <property type="evidence" value="ECO:0007669"/>
    <property type="project" value="InterPro"/>
</dbReference>
<dbReference type="CDD" id="cd10234">
    <property type="entry name" value="ASKHA_NBD_HSP70_DnaK-like"/>
    <property type="match status" value="1"/>
</dbReference>
<dbReference type="FunFam" id="2.60.34.10:FF:000014">
    <property type="entry name" value="Chaperone protein DnaK HSP70"/>
    <property type="match status" value="1"/>
</dbReference>
<dbReference type="FunFam" id="3.30.420.40:FF:000020">
    <property type="entry name" value="Chaperone protein HscA homolog"/>
    <property type="match status" value="1"/>
</dbReference>
<dbReference type="FunFam" id="1.20.1270.10:FF:000001">
    <property type="entry name" value="Molecular chaperone DnaK"/>
    <property type="match status" value="1"/>
</dbReference>
<dbReference type="FunFam" id="3.30.420.40:FF:000004">
    <property type="entry name" value="Molecular chaperone DnaK"/>
    <property type="match status" value="1"/>
</dbReference>
<dbReference type="FunFam" id="3.90.640.10:FF:000003">
    <property type="entry name" value="Molecular chaperone DnaK"/>
    <property type="match status" value="1"/>
</dbReference>
<dbReference type="Gene3D" id="1.20.1270.10">
    <property type="match status" value="1"/>
</dbReference>
<dbReference type="Gene3D" id="3.30.420.40">
    <property type="match status" value="2"/>
</dbReference>
<dbReference type="Gene3D" id="3.90.640.10">
    <property type="entry name" value="Actin, Chain A, domain 4"/>
    <property type="match status" value="1"/>
</dbReference>
<dbReference type="Gene3D" id="2.60.34.10">
    <property type="entry name" value="Substrate Binding Domain Of DNAk, Chain A, domain 1"/>
    <property type="match status" value="1"/>
</dbReference>
<dbReference type="HAMAP" id="MF_00332">
    <property type="entry name" value="DnaK"/>
    <property type="match status" value="1"/>
</dbReference>
<dbReference type="InterPro" id="IPR043129">
    <property type="entry name" value="ATPase_NBD"/>
</dbReference>
<dbReference type="InterPro" id="IPR012725">
    <property type="entry name" value="Chaperone_DnaK"/>
</dbReference>
<dbReference type="InterPro" id="IPR018181">
    <property type="entry name" value="Heat_shock_70_CS"/>
</dbReference>
<dbReference type="InterPro" id="IPR029048">
    <property type="entry name" value="HSP70_C_sf"/>
</dbReference>
<dbReference type="InterPro" id="IPR029047">
    <property type="entry name" value="HSP70_peptide-bd_sf"/>
</dbReference>
<dbReference type="InterPro" id="IPR013126">
    <property type="entry name" value="Hsp_70_fam"/>
</dbReference>
<dbReference type="NCBIfam" id="NF001413">
    <property type="entry name" value="PRK00290.1"/>
    <property type="match status" value="1"/>
</dbReference>
<dbReference type="NCBIfam" id="NF003520">
    <property type="entry name" value="PRK05183.1"/>
    <property type="match status" value="1"/>
</dbReference>
<dbReference type="NCBIfam" id="TIGR02350">
    <property type="entry name" value="prok_dnaK"/>
    <property type="match status" value="1"/>
</dbReference>
<dbReference type="PANTHER" id="PTHR19375">
    <property type="entry name" value="HEAT SHOCK PROTEIN 70KDA"/>
    <property type="match status" value="1"/>
</dbReference>
<dbReference type="Pfam" id="PF00012">
    <property type="entry name" value="HSP70"/>
    <property type="match status" value="1"/>
</dbReference>
<dbReference type="PRINTS" id="PR00301">
    <property type="entry name" value="HEATSHOCK70"/>
</dbReference>
<dbReference type="SUPFAM" id="SSF53067">
    <property type="entry name" value="Actin-like ATPase domain"/>
    <property type="match status" value="2"/>
</dbReference>
<dbReference type="SUPFAM" id="SSF100934">
    <property type="entry name" value="Heat shock protein 70kD (HSP70), C-terminal subdomain"/>
    <property type="match status" value="1"/>
</dbReference>
<dbReference type="SUPFAM" id="SSF100920">
    <property type="entry name" value="Heat shock protein 70kD (HSP70), peptide-binding domain"/>
    <property type="match status" value="1"/>
</dbReference>
<dbReference type="PROSITE" id="PS00297">
    <property type="entry name" value="HSP70_1"/>
    <property type="match status" value="1"/>
</dbReference>
<dbReference type="PROSITE" id="PS00329">
    <property type="entry name" value="HSP70_2"/>
    <property type="match status" value="1"/>
</dbReference>
<dbReference type="PROSITE" id="PS01036">
    <property type="entry name" value="HSP70_3"/>
    <property type="match status" value="1"/>
</dbReference>
<reference key="1">
    <citation type="journal article" date="2009" name="BMC Microbiol.">
        <title>The genome sequence of Geobacter metallireducens: features of metabolism, physiology and regulation common and dissimilar to Geobacter sulfurreducens.</title>
        <authorList>
            <person name="Aklujkar M."/>
            <person name="Krushkal J."/>
            <person name="DiBartolo G."/>
            <person name="Lapidus A."/>
            <person name="Land M.L."/>
            <person name="Lovley D.R."/>
        </authorList>
    </citation>
    <scope>NUCLEOTIDE SEQUENCE [LARGE SCALE GENOMIC DNA]</scope>
    <source>
        <strain>ATCC 53774 / DSM 7210 / GS-15</strain>
    </source>
</reference>
<protein>
    <recommendedName>
        <fullName evidence="1">Chaperone protein DnaK</fullName>
    </recommendedName>
    <alternativeName>
        <fullName evidence="1">HSP70</fullName>
    </alternativeName>
    <alternativeName>
        <fullName evidence="1">Heat shock 70 kDa protein</fullName>
    </alternativeName>
    <alternativeName>
        <fullName evidence="1">Heat shock protein 70</fullName>
    </alternativeName>
</protein>
<keyword id="KW-0067">ATP-binding</keyword>
<keyword id="KW-0143">Chaperone</keyword>
<keyword id="KW-0547">Nucleotide-binding</keyword>
<keyword id="KW-0597">Phosphoprotein</keyword>
<keyword id="KW-1185">Reference proteome</keyword>
<keyword id="KW-0346">Stress response</keyword>
<evidence type="ECO:0000255" key="1">
    <source>
        <dbReference type="HAMAP-Rule" id="MF_00332"/>
    </source>
</evidence>
<evidence type="ECO:0000256" key="2">
    <source>
        <dbReference type="SAM" id="MobiDB-lite"/>
    </source>
</evidence>
<sequence length="638" mass="68479">MSKVIGIDLGTTNSCVAIMEGGEPVVIANSEGSRTTPSMVAFAESGERLVGQQAKRQAVTNPENTLFAIKRLIGRKFDTDEVRKDISISPFKIVKADNGDAWVDVRGKMYSPPEVSAIVLQKMKKTAEDYLGETVTDAVITVPAYFNDSQRQATKDAGKIAGLNVLRIINEPTAAALAYGLDKKKDEKIAVFDLGGGTFDISILELGDGVFEVKSTNGDTFLGGEDFDQRVIDWIADEFKKDQGIDLRGDKMALQRLKEAAEKAKCELSSSMETDINLPFITADATGPKHLTMKLSRAKLEALCAELLDKLEGPCRTALKDAGLSPSEVDEVILVGGMTRMPAVQKRVQEIFGKAPNKGVNPDEVVAIGAGIQGGVLRGDVKDVLLLDVTPLSLGIETLGSVMTKLIDKNTTIPCRKSQVFSTASDNQPAVTIHVLQGEREMASDNKTLGNFELTGIPPAPRGVPQIEVTFDIDANGIVHVSAKDLGTGKEQSIRITASSGLSKEEIDKMVREAESHAADDKKKRELIEARNHADTLAYSTEKSLKEYGDKIGDDEKKKIEEAVAALKKAMEGDDVDAIKQATDALTQASHKLAEAVYAKTQTEGGAQPGAEADGDTGAKGGEKVVDADFEEVKDDKK</sequence>
<accession>Q39PT7</accession>
<feature type="chain" id="PRO_1000059567" description="Chaperone protein DnaK">
    <location>
        <begin position="1"/>
        <end position="638"/>
    </location>
</feature>
<feature type="region of interest" description="Disordered" evidence="2">
    <location>
        <begin position="600"/>
        <end position="638"/>
    </location>
</feature>
<feature type="compositionally biased region" description="Acidic residues" evidence="2">
    <location>
        <begin position="628"/>
        <end position="638"/>
    </location>
</feature>
<feature type="modified residue" description="Phosphothreonine; by autocatalysis" evidence="1">
    <location>
        <position position="198"/>
    </location>
</feature>
<proteinExistence type="inferred from homology"/>
<gene>
    <name evidence="1" type="primary">dnaK</name>
    <name type="ordered locus">Gmet_3532</name>
</gene>
<organism>
    <name type="scientific">Geobacter metallireducens (strain ATCC 53774 / DSM 7210 / GS-15)</name>
    <dbReference type="NCBI Taxonomy" id="269799"/>
    <lineage>
        <taxon>Bacteria</taxon>
        <taxon>Pseudomonadati</taxon>
        <taxon>Thermodesulfobacteriota</taxon>
        <taxon>Desulfuromonadia</taxon>
        <taxon>Geobacterales</taxon>
        <taxon>Geobacteraceae</taxon>
        <taxon>Geobacter</taxon>
    </lineage>
</organism>
<name>DNAK_GEOMG</name>
<comment type="function">
    <text evidence="1">Acts as a chaperone.</text>
</comment>
<comment type="induction">
    <text evidence="1">By stress conditions e.g. heat shock.</text>
</comment>
<comment type="similarity">
    <text evidence="1">Belongs to the heat shock protein 70 family.</text>
</comment>